<dbReference type="EC" id="2.8.1.13" evidence="1"/>
<dbReference type="EMBL" id="AE009951">
    <property type="protein sequence ID" value="AAL94019.1"/>
    <property type="molecule type" value="Genomic_DNA"/>
</dbReference>
<dbReference type="RefSeq" id="NP_602720.1">
    <property type="nucleotide sequence ID" value="NC_003454.1"/>
</dbReference>
<dbReference type="SMR" id="Q8R5Z5"/>
<dbReference type="STRING" id="190304.FN1920"/>
<dbReference type="PaxDb" id="190304-FN1920"/>
<dbReference type="EnsemblBacteria" id="AAL94019">
    <property type="protein sequence ID" value="AAL94019"/>
    <property type="gene ID" value="FN1920"/>
</dbReference>
<dbReference type="KEGG" id="fnu:FN1920"/>
<dbReference type="PATRIC" id="fig|190304.8.peg.395"/>
<dbReference type="eggNOG" id="COG0482">
    <property type="taxonomic scope" value="Bacteria"/>
</dbReference>
<dbReference type="HOGENOM" id="CLU_035188_0_0_0"/>
<dbReference type="InParanoid" id="Q8R5Z5"/>
<dbReference type="BioCyc" id="FNUC190304:G1FZS-414-MONOMER"/>
<dbReference type="Proteomes" id="UP000002521">
    <property type="component" value="Chromosome"/>
</dbReference>
<dbReference type="GO" id="GO:0005737">
    <property type="term" value="C:cytoplasm"/>
    <property type="evidence" value="ECO:0007669"/>
    <property type="project" value="UniProtKB-SubCell"/>
</dbReference>
<dbReference type="GO" id="GO:0005524">
    <property type="term" value="F:ATP binding"/>
    <property type="evidence" value="ECO:0007669"/>
    <property type="project" value="UniProtKB-KW"/>
</dbReference>
<dbReference type="GO" id="GO:0000049">
    <property type="term" value="F:tRNA binding"/>
    <property type="evidence" value="ECO:0007669"/>
    <property type="project" value="UniProtKB-KW"/>
</dbReference>
<dbReference type="GO" id="GO:0103016">
    <property type="term" value="F:tRNA-uridine 2-sulfurtransferase activity"/>
    <property type="evidence" value="ECO:0007669"/>
    <property type="project" value="UniProtKB-EC"/>
</dbReference>
<dbReference type="GO" id="GO:0002143">
    <property type="term" value="P:tRNA wobble position uridine thiolation"/>
    <property type="evidence" value="ECO:0000318"/>
    <property type="project" value="GO_Central"/>
</dbReference>
<dbReference type="CDD" id="cd01998">
    <property type="entry name" value="MnmA_TRMU-like"/>
    <property type="match status" value="1"/>
</dbReference>
<dbReference type="FunFam" id="2.30.30.280:FF:000001">
    <property type="entry name" value="tRNA-specific 2-thiouridylase MnmA"/>
    <property type="match status" value="1"/>
</dbReference>
<dbReference type="Gene3D" id="2.30.30.280">
    <property type="entry name" value="Adenine nucleotide alpha hydrolases-like domains"/>
    <property type="match status" value="1"/>
</dbReference>
<dbReference type="Gene3D" id="3.40.50.620">
    <property type="entry name" value="HUPs"/>
    <property type="match status" value="1"/>
</dbReference>
<dbReference type="HAMAP" id="MF_00144">
    <property type="entry name" value="tRNA_thiouridyl_MnmA"/>
    <property type="match status" value="1"/>
</dbReference>
<dbReference type="InterPro" id="IPR004506">
    <property type="entry name" value="MnmA-like"/>
</dbReference>
<dbReference type="InterPro" id="IPR046884">
    <property type="entry name" value="MnmA-like_central"/>
</dbReference>
<dbReference type="InterPro" id="IPR023382">
    <property type="entry name" value="MnmA-like_central_sf"/>
</dbReference>
<dbReference type="InterPro" id="IPR014729">
    <property type="entry name" value="Rossmann-like_a/b/a_fold"/>
</dbReference>
<dbReference type="NCBIfam" id="NF001138">
    <property type="entry name" value="PRK00143.1"/>
    <property type="match status" value="1"/>
</dbReference>
<dbReference type="NCBIfam" id="TIGR00420">
    <property type="entry name" value="trmU"/>
    <property type="match status" value="1"/>
</dbReference>
<dbReference type="PANTHER" id="PTHR11933:SF5">
    <property type="entry name" value="MITOCHONDRIAL TRNA-SPECIFIC 2-THIOURIDYLASE 1"/>
    <property type="match status" value="1"/>
</dbReference>
<dbReference type="PANTHER" id="PTHR11933">
    <property type="entry name" value="TRNA 5-METHYLAMINOMETHYL-2-THIOURIDYLATE -METHYLTRANSFERASE"/>
    <property type="match status" value="1"/>
</dbReference>
<dbReference type="Pfam" id="PF03054">
    <property type="entry name" value="tRNA_Me_trans"/>
    <property type="match status" value="1"/>
</dbReference>
<dbReference type="Pfam" id="PF20259">
    <property type="entry name" value="tRNA_Me_trans_M"/>
    <property type="match status" value="1"/>
</dbReference>
<dbReference type="SUPFAM" id="SSF52402">
    <property type="entry name" value="Adenine nucleotide alpha hydrolases-like"/>
    <property type="match status" value="1"/>
</dbReference>
<accession>Q8R5Z5</accession>
<organism>
    <name type="scientific">Fusobacterium nucleatum subsp. nucleatum (strain ATCC 25586 / DSM 15643 / BCRC 10681 / CIP 101130 / JCM 8532 / KCTC 2640 / LMG 13131 / VPI 4355)</name>
    <dbReference type="NCBI Taxonomy" id="190304"/>
    <lineage>
        <taxon>Bacteria</taxon>
        <taxon>Fusobacteriati</taxon>
        <taxon>Fusobacteriota</taxon>
        <taxon>Fusobacteriia</taxon>
        <taxon>Fusobacteriales</taxon>
        <taxon>Fusobacteriaceae</taxon>
        <taxon>Fusobacterium</taxon>
    </lineage>
</organism>
<gene>
    <name evidence="1" type="primary">mnmA2</name>
    <name type="ordered locus">FN1920</name>
</gene>
<sequence>MKKVVIGMSGGVDSSVSAYLLKEQGYEVIGITLNQHLEENSKDIEDTKKVCDKLGIIHEVVNIRKDFENIVIKYFLEGYNSGKTPSPCIICDDEIKFKILFDIADKYNAEYVATGHYTSVEYSEVFSKYLLKSVHSIIKDQSYMLYRLSPDKLERLIFPLKDYSKQEIREIALKIDLEVHDKKDSQGVCFAKEGYKEFLKENLRDEIVRGNFIDKNGNILGQHEGYQLYTIGQRRGLGINLSKPVFITEIKAQTNDIVLGEFSELFIDKVELINSKFSVEYEKLENLELLARPRFSSTGFYGKLIKDKNKIYFKYNEENAHNAKGQHIVFFYDGFVVGGGEIK</sequence>
<feature type="chain" id="PRO_0000349644" description="tRNA-specific 2-thiouridylase MnmA 2">
    <location>
        <begin position="1"/>
        <end position="343"/>
    </location>
</feature>
<feature type="region of interest" description="Interaction with tRNA" evidence="1">
    <location>
        <begin position="139"/>
        <end position="141"/>
    </location>
</feature>
<feature type="active site" description="Nucleophile" evidence="1">
    <location>
        <position position="91"/>
    </location>
</feature>
<feature type="active site" description="Cysteine persulfide intermediate" evidence="1">
    <location>
        <position position="189"/>
    </location>
</feature>
<feature type="binding site" evidence="1">
    <location>
        <begin position="7"/>
        <end position="14"/>
    </location>
    <ligand>
        <name>ATP</name>
        <dbReference type="ChEBI" id="CHEBI:30616"/>
    </ligand>
</feature>
<feature type="binding site" evidence="1">
    <location>
        <position position="33"/>
    </location>
    <ligand>
        <name>ATP</name>
        <dbReference type="ChEBI" id="CHEBI:30616"/>
    </ligand>
</feature>
<feature type="binding site" evidence="1">
    <location>
        <position position="115"/>
    </location>
    <ligand>
        <name>ATP</name>
        <dbReference type="ChEBI" id="CHEBI:30616"/>
    </ligand>
</feature>
<feature type="site" description="Interaction with tRNA" evidence="1">
    <location>
        <position position="116"/>
    </location>
</feature>
<feature type="site" description="Interaction with tRNA" evidence="1">
    <location>
        <position position="326"/>
    </location>
</feature>
<feature type="disulfide bond" description="Alternate" evidence="1">
    <location>
        <begin position="91"/>
        <end position="189"/>
    </location>
</feature>
<evidence type="ECO:0000255" key="1">
    <source>
        <dbReference type="HAMAP-Rule" id="MF_00144"/>
    </source>
</evidence>
<proteinExistence type="inferred from homology"/>
<protein>
    <recommendedName>
        <fullName evidence="1">tRNA-specific 2-thiouridylase MnmA 2</fullName>
        <ecNumber evidence="1">2.8.1.13</ecNumber>
    </recommendedName>
</protein>
<comment type="function">
    <text evidence="1">Catalyzes the 2-thiolation of uridine at the wobble position (U34) of tRNA, leading to the formation of s(2)U34.</text>
</comment>
<comment type="catalytic activity">
    <reaction evidence="1">
        <text>S-sulfanyl-L-cysteinyl-[protein] + uridine(34) in tRNA + AH2 + ATP = 2-thiouridine(34) in tRNA + L-cysteinyl-[protein] + A + AMP + diphosphate + H(+)</text>
        <dbReference type="Rhea" id="RHEA:47032"/>
        <dbReference type="Rhea" id="RHEA-COMP:10131"/>
        <dbReference type="Rhea" id="RHEA-COMP:11726"/>
        <dbReference type="Rhea" id="RHEA-COMP:11727"/>
        <dbReference type="Rhea" id="RHEA-COMP:11728"/>
        <dbReference type="ChEBI" id="CHEBI:13193"/>
        <dbReference type="ChEBI" id="CHEBI:15378"/>
        <dbReference type="ChEBI" id="CHEBI:17499"/>
        <dbReference type="ChEBI" id="CHEBI:29950"/>
        <dbReference type="ChEBI" id="CHEBI:30616"/>
        <dbReference type="ChEBI" id="CHEBI:33019"/>
        <dbReference type="ChEBI" id="CHEBI:61963"/>
        <dbReference type="ChEBI" id="CHEBI:65315"/>
        <dbReference type="ChEBI" id="CHEBI:87170"/>
        <dbReference type="ChEBI" id="CHEBI:456215"/>
        <dbReference type="EC" id="2.8.1.13"/>
    </reaction>
</comment>
<comment type="subcellular location">
    <subcellularLocation>
        <location evidence="1">Cytoplasm</location>
    </subcellularLocation>
</comment>
<comment type="similarity">
    <text evidence="1">Belongs to the MnmA/TRMU family.</text>
</comment>
<keyword id="KW-0067">ATP-binding</keyword>
<keyword id="KW-0963">Cytoplasm</keyword>
<keyword id="KW-1015">Disulfide bond</keyword>
<keyword id="KW-0547">Nucleotide-binding</keyword>
<keyword id="KW-1185">Reference proteome</keyword>
<keyword id="KW-0694">RNA-binding</keyword>
<keyword id="KW-0808">Transferase</keyword>
<keyword id="KW-0819">tRNA processing</keyword>
<keyword id="KW-0820">tRNA-binding</keyword>
<reference key="1">
    <citation type="journal article" date="2002" name="J. Bacteriol.">
        <title>Genome sequence and analysis of the oral bacterium Fusobacterium nucleatum strain ATCC 25586.</title>
        <authorList>
            <person name="Kapatral V."/>
            <person name="Anderson I."/>
            <person name="Ivanova N."/>
            <person name="Reznik G."/>
            <person name="Los T."/>
            <person name="Lykidis A."/>
            <person name="Bhattacharyya A."/>
            <person name="Bartman A."/>
            <person name="Gardner W."/>
            <person name="Grechkin G."/>
            <person name="Zhu L."/>
            <person name="Vasieva O."/>
            <person name="Chu L."/>
            <person name="Kogan Y."/>
            <person name="Chaga O."/>
            <person name="Goltsman E."/>
            <person name="Bernal A."/>
            <person name="Larsen N."/>
            <person name="D'Souza M."/>
            <person name="Walunas T."/>
            <person name="Pusch G."/>
            <person name="Haselkorn R."/>
            <person name="Fonstein M."/>
            <person name="Kyrpides N.C."/>
            <person name="Overbeek R."/>
        </authorList>
    </citation>
    <scope>NUCLEOTIDE SEQUENCE [LARGE SCALE GENOMIC DNA]</scope>
    <source>
        <strain>ATCC 25586 / DSM 15643 / BCRC 10681 / CIP 101130 / JCM 8532 / KCTC 2640 / LMG 13131 / VPI 4355</strain>
    </source>
</reference>
<name>MNMA2_FUSNN</name>